<sequence>MKTYLAKPNEVPKKWYVIDATGKPLGRLAAKIAVILRGKHKPQFTPNVDTGDYVIVVNAEKVVLTGKKLDKDGYRYHTKYPGGLKFIPYRRLLEKHPEKAIEIAVRGMLPKNRLRDRFMRKLKVYRGPNHPHAAQKPEVLEI</sequence>
<protein>
    <recommendedName>
        <fullName evidence="1">Large ribosomal subunit protein uL13</fullName>
    </recommendedName>
    <alternativeName>
        <fullName evidence="2">50S ribosomal protein L13</fullName>
    </alternativeName>
</protein>
<name>RL13_CALS8</name>
<reference key="1">
    <citation type="submission" date="2007-04" db="EMBL/GenBank/DDBJ databases">
        <title>Genome sequence of the thermophilic hydrogen-producing bacterium Caldicellulosiruptor saccharolyticus DSM 8903.</title>
        <authorList>
            <person name="Copeland A."/>
            <person name="Lucas S."/>
            <person name="Lapidus A."/>
            <person name="Barry K."/>
            <person name="Detter J.C."/>
            <person name="Glavina del Rio T."/>
            <person name="Hammon N."/>
            <person name="Israni S."/>
            <person name="Dalin E."/>
            <person name="Tice H."/>
            <person name="Pitluck S."/>
            <person name="Kiss H."/>
            <person name="Brettin T."/>
            <person name="Bruce D."/>
            <person name="Han C."/>
            <person name="Schmutz J."/>
            <person name="Larimer F."/>
            <person name="Land M."/>
            <person name="Hauser L."/>
            <person name="Kyrpides N."/>
            <person name="Lykidis A."/>
            <person name="van de Werken H.J.G."/>
            <person name="Verhaart M.R.A."/>
            <person name="VanFossen A.L."/>
            <person name="Lewis D.L."/>
            <person name="Nichols J.D."/>
            <person name="Goorissen H.P."/>
            <person name="van Niel E.W.J."/>
            <person name="Stams F.J.M."/>
            <person name="Willquist K.U."/>
            <person name="Ward D.E."/>
            <person name="van der Oost J."/>
            <person name="Kelly R.M."/>
            <person name="Kengen S.M.W."/>
            <person name="Richardson P."/>
        </authorList>
    </citation>
    <scope>NUCLEOTIDE SEQUENCE [LARGE SCALE GENOMIC DNA]</scope>
    <source>
        <strain>ATCC 43494 / DSM 8903 / Tp8T 6331</strain>
    </source>
</reference>
<gene>
    <name evidence="1" type="primary">rplM</name>
    <name type="ordered locus">Csac_1342</name>
</gene>
<comment type="function">
    <text evidence="1">This protein is one of the early assembly proteins of the 50S ribosomal subunit, although it is not seen to bind rRNA by itself. It is important during the early stages of 50S assembly.</text>
</comment>
<comment type="subunit">
    <text evidence="1">Part of the 50S ribosomal subunit.</text>
</comment>
<comment type="similarity">
    <text evidence="1">Belongs to the universal ribosomal protein uL13 family.</text>
</comment>
<proteinExistence type="inferred from homology"/>
<evidence type="ECO:0000255" key="1">
    <source>
        <dbReference type="HAMAP-Rule" id="MF_01366"/>
    </source>
</evidence>
<evidence type="ECO:0000305" key="2"/>
<accession>A4XJ59</accession>
<feature type="chain" id="PRO_1000055361" description="Large ribosomal subunit protein uL13">
    <location>
        <begin position="1"/>
        <end position="142"/>
    </location>
</feature>
<dbReference type="EMBL" id="CP000679">
    <property type="protein sequence ID" value="ABP66944.1"/>
    <property type="molecule type" value="Genomic_DNA"/>
</dbReference>
<dbReference type="RefSeq" id="WP_011916879.1">
    <property type="nucleotide sequence ID" value="NC_009437.1"/>
</dbReference>
<dbReference type="SMR" id="A4XJ59"/>
<dbReference type="STRING" id="351627.Csac_1342"/>
<dbReference type="KEGG" id="csc:Csac_1342"/>
<dbReference type="eggNOG" id="COG0102">
    <property type="taxonomic scope" value="Bacteria"/>
</dbReference>
<dbReference type="HOGENOM" id="CLU_082184_2_2_9"/>
<dbReference type="OrthoDB" id="9801330at2"/>
<dbReference type="Proteomes" id="UP000000256">
    <property type="component" value="Chromosome"/>
</dbReference>
<dbReference type="GO" id="GO:0022625">
    <property type="term" value="C:cytosolic large ribosomal subunit"/>
    <property type="evidence" value="ECO:0007669"/>
    <property type="project" value="TreeGrafter"/>
</dbReference>
<dbReference type="GO" id="GO:0003729">
    <property type="term" value="F:mRNA binding"/>
    <property type="evidence" value="ECO:0007669"/>
    <property type="project" value="TreeGrafter"/>
</dbReference>
<dbReference type="GO" id="GO:0003735">
    <property type="term" value="F:structural constituent of ribosome"/>
    <property type="evidence" value="ECO:0007669"/>
    <property type="project" value="InterPro"/>
</dbReference>
<dbReference type="GO" id="GO:0017148">
    <property type="term" value="P:negative regulation of translation"/>
    <property type="evidence" value="ECO:0007669"/>
    <property type="project" value="TreeGrafter"/>
</dbReference>
<dbReference type="GO" id="GO:0006412">
    <property type="term" value="P:translation"/>
    <property type="evidence" value="ECO:0007669"/>
    <property type="project" value="UniProtKB-UniRule"/>
</dbReference>
<dbReference type="CDD" id="cd00392">
    <property type="entry name" value="Ribosomal_L13"/>
    <property type="match status" value="1"/>
</dbReference>
<dbReference type="FunFam" id="3.90.1180.10:FF:000001">
    <property type="entry name" value="50S ribosomal protein L13"/>
    <property type="match status" value="1"/>
</dbReference>
<dbReference type="Gene3D" id="3.90.1180.10">
    <property type="entry name" value="Ribosomal protein L13"/>
    <property type="match status" value="1"/>
</dbReference>
<dbReference type="HAMAP" id="MF_01366">
    <property type="entry name" value="Ribosomal_uL13"/>
    <property type="match status" value="1"/>
</dbReference>
<dbReference type="InterPro" id="IPR005822">
    <property type="entry name" value="Ribosomal_uL13"/>
</dbReference>
<dbReference type="InterPro" id="IPR005823">
    <property type="entry name" value="Ribosomal_uL13_bac-type"/>
</dbReference>
<dbReference type="InterPro" id="IPR036899">
    <property type="entry name" value="Ribosomal_uL13_sf"/>
</dbReference>
<dbReference type="NCBIfam" id="TIGR01066">
    <property type="entry name" value="rplM_bact"/>
    <property type="match status" value="1"/>
</dbReference>
<dbReference type="PANTHER" id="PTHR11545:SF2">
    <property type="entry name" value="LARGE RIBOSOMAL SUBUNIT PROTEIN UL13M"/>
    <property type="match status" value="1"/>
</dbReference>
<dbReference type="PANTHER" id="PTHR11545">
    <property type="entry name" value="RIBOSOMAL PROTEIN L13"/>
    <property type="match status" value="1"/>
</dbReference>
<dbReference type="Pfam" id="PF00572">
    <property type="entry name" value="Ribosomal_L13"/>
    <property type="match status" value="1"/>
</dbReference>
<dbReference type="PIRSF" id="PIRSF002181">
    <property type="entry name" value="Ribosomal_L13"/>
    <property type="match status" value="1"/>
</dbReference>
<dbReference type="SUPFAM" id="SSF52161">
    <property type="entry name" value="Ribosomal protein L13"/>
    <property type="match status" value="1"/>
</dbReference>
<organism>
    <name type="scientific">Caldicellulosiruptor saccharolyticus (strain ATCC 43494 / DSM 8903 / Tp8T 6331)</name>
    <dbReference type="NCBI Taxonomy" id="351627"/>
    <lineage>
        <taxon>Bacteria</taxon>
        <taxon>Bacillati</taxon>
        <taxon>Bacillota</taxon>
        <taxon>Bacillota incertae sedis</taxon>
        <taxon>Caldicellulosiruptorales</taxon>
        <taxon>Caldicellulosiruptoraceae</taxon>
        <taxon>Caldicellulosiruptor</taxon>
    </lineage>
</organism>
<keyword id="KW-0687">Ribonucleoprotein</keyword>
<keyword id="KW-0689">Ribosomal protein</keyword>